<keyword id="KW-1015">Disulfide bond</keyword>
<keyword id="KW-0646">Protease inhibitor</keyword>
<keyword id="KW-0964">Secreted</keyword>
<keyword id="KW-0722">Serine protease inhibitor</keyword>
<keyword id="KW-0732">Signal</keyword>
<reference key="1">
    <citation type="journal article" date="2010" name="J. Proteome Res.">
        <title>Molecular diversification of peptide toxins from the tarantula Haplopelma hainanum (Ornithoctonus hainana) venom based on transcriptomic, peptidomic, and genomic analyses.</title>
        <authorList>
            <person name="Tang X."/>
            <person name="Zhang Y."/>
            <person name="Hu W."/>
            <person name="Xu D."/>
            <person name="Tao H."/>
            <person name="Yang X."/>
            <person name="Li Y."/>
            <person name="Jiang L."/>
            <person name="Liang S."/>
        </authorList>
    </citation>
    <scope>NUCLEOTIDE SEQUENCE [LARGE SCALE GENOMIC DNA / MRNA]</scope>
    <source>
        <tissue>Venom gland</tissue>
    </source>
</reference>
<evidence type="ECO:0000250" key="1"/>
<evidence type="ECO:0000250" key="2">
    <source>
        <dbReference type="UniProtKB" id="P68425"/>
    </source>
</evidence>
<evidence type="ECO:0000255" key="3"/>
<evidence type="ECO:0000255" key="4">
    <source>
        <dbReference type="PROSITE-ProRule" id="PRU00031"/>
    </source>
</evidence>
<evidence type="ECO:0000305" key="5"/>
<evidence type="ECO:0000305" key="6">
    <source>
    </source>
</evidence>
<proteinExistence type="inferred from homology"/>
<organism>
    <name type="scientific">Cyriopagopus hainanus</name>
    <name type="common">Chinese bird spider</name>
    <name type="synonym">Haplopelma hainanum</name>
    <dbReference type="NCBI Taxonomy" id="209901"/>
    <lineage>
        <taxon>Eukaryota</taxon>
        <taxon>Metazoa</taxon>
        <taxon>Ecdysozoa</taxon>
        <taxon>Arthropoda</taxon>
        <taxon>Chelicerata</taxon>
        <taxon>Arachnida</taxon>
        <taxon>Araneae</taxon>
        <taxon>Mygalomorphae</taxon>
        <taxon>Theraphosidae</taxon>
        <taxon>Haplopelma</taxon>
    </lineage>
</organism>
<dbReference type="EMBL" id="GU292999">
    <property type="protein sequence ID" value="ADB56815.1"/>
    <property type="molecule type" value="mRNA"/>
</dbReference>
<dbReference type="EMBL" id="GU293131">
    <property type="protein sequence ID" value="ADB56947.1"/>
    <property type="molecule type" value="Genomic_DNA"/>
</dbReference>
<dbReference type="SMR" id="D2Y2C2"/>
<dbReference type="ArachnoServer" id="AS002024">
    <property type="toxin name" value="U15-theraphotoxin-Hhn1a"/>
</dbReference>
<dbReference type="GO" id="GO:0005615">
    <property type="term" value="C:extracellular space"/>
    <property type="evidence" value="ECO:0007669"/>
    <property type="project" value="TreeGrafter"/>
</dbReference>
<dbReference type="GO" id="GO:0015459">
    <property type="term" value="F:potassium channel regulator activity"/>
    <property type="evidence" value="ECO:0007669"/>
    <property type="project" value="UniProtKB-KW"/>
</dbReference>
<dbReference type="GO" id="GO:0004867">
    <property type="term" value="F:serine-type endopeptidase inhibitor activity"/>
    <property type="evidence" value="ECO:0007669"/>
    <property type="project" value="UniProtKB-KW"/>
</dbReference>
<dbReference type="GO" id="GO:0090729">
    <property type="term" value="F:toxin activity"/>
    <property type="evidence" value="ECO:0007669"/>
    <property type="project" value="UniProtKB-KW"/>
</dbReference>
<dbReference type="GO" id="GO:0044562">
    <property type="term" value="P:envenomation resulting in negative regulation of voltage-gated potassium channel activity in another organism"/>
    <property type="evidence" value="ECO:0007669"/>
    <property type="project" value="UniProtKB-ARBA"/>
</dbReference>
<dbReference type="CDD" id="cd22598">
    <property type="entry name" value="Kunitz_huwentoxin"/>
    <property type="match status" value="1"/>
</dbReference>
<dbReference type="FunFam" id="4.10.410.10:FF:000020">
    <property type="entry name" value="Collagen, type VI, alpha 3"/>
    <property type="match status" value="1"/>
</dbReference>
<dbReference type="Gene3D" id="4.10.410.10">
    <property type="entry name" value="Pancreatic trypsin inhibitor Kunitz domain"/>
    <property type="match status" value="1"/>
</dbReference>
<dbReference type="InterPro" id="IPR002223">
    <property type="entry name" value="Kunitz_BPTI"/>
</dbReference>
<dbReference type="InterPro" id="IPR036880">
    <property type="entry name" value="Kunitz_BPTI_sf"/>
</dbReference>
<dbReference type="InterPro" id="IPR050098">
    <property type="entry name" value="TFPI/VKTCI-like"/>
</dbReference>
<dbReference type="PANTHER" id="PTHR10083">
    <property type="entry name" value="KUNITZ-TYPE PROTEASE INHIBITOR-RELATED"/>
    <property type="match status" value="1"/>
</dbReference>
<dbReference type="PANTHER" id="PTHR10083:SF328">
    <property type="entry name" value="TISSUE FACTOR PATHWAY INHIBITOR"/>
    <property type="match status" value="1"/>
</dbReference>
<dbReference type="Pfam" id="PF00014">
    <property type="entry name" value="Kunitz_BPTI"/>
    <property type="match status" value="1"/>
</dbReference>
<dbReference type="PRINTS" id="PR00759">
    <property type="entry name" value="BASICPTASE"/>
</dbReference>
<dbReference type="SMART" id="SM00131">
    <property type="entry name" value="KU"/>
    <property type="match status" value="1"/>
</dbReference>
<dbReference type="SUPFAM" id="SSF57362">
    <property type="entry name" value="BPTI-like"/>
    <property type="match status" value="1"/>
</dbReference>
<dbReference type="PROSITE" id="PS50279">
    <property type="entry name" value="BPTI_KUNITZ_2"/>
    <property type="match status" value="1"/>
</dbReference>
<feature type="signal peptide" evidence="3">
    <location>
        <begin position="1"/>
        <end position="27"/>
    </location>
</feature>
<feature type="propeptide" id="PRO_0000400978" evidence="1">
    <location>
        <begin position="28"/>
        <end position="33"/>
    </location>
</feature>
<feature type="peptide" id="PRO_0000400979" description="Kunitz-type U15-theraphotoxin-Hhn1a">
    <location>
        <begin position="34"/>
        <end position="88"/>
    </location>
</feature>
<feature type="domain" description="BPTI/Kunitz inhibitor" evidence="4">
    <location>
        <begin position="37"/>
        <end position="85"/>
    </location>
</feature>
<feature type="site" description="Reactive bond for chymotrypsin" evidence="1">
    <location>
        <begin position="47"/>
        <end position="48"/>
    </location>
</feature>
<feature type="disulfide bond" evidence="4">
    <location>
        <begin position="37"/>
        <end position="85"/>
    </location>
</feature>
<feature type="disulfide bond" evidence="4">
    <location>
        <begin position="60"/>
        <end position="81"/>
    </location>
</feature>
<protein>
    <recommendedName>
        <fullName>Kunitz-type U15-theraphotoxin-Hhn1a</fullName>
        <shortName>U15-TRTX-Hhn1a</shortName>
    </recommendedName>
    <alternativeName>
        <fullName>Kunitz-type serine protease inhibitor hainantoxin-XI</fullName>
        <shortName>HNTX-XI</shortName>
    </alternativeName>
</protein>
<sequence length="88" mass="9892">MGTARFLRAVLLLSVLLMVTFPALLSAEHHDGRVDICRLPSDSGDCLRFFEMWYFDGTTCTKFVYGGYGGNDNRFPTEKACMKRCAKA</sequence>
<comment type="function">
    <text evidence="2">Serine protease inhibitor that inhibits trypsin at a molar ratio of 1:1.</text>
</comment>
<comment type="subcellular location">
    <subcellularLocation>
        <location evidence="6">Secreted</location>
    </subcellularLocation>
</comment>
<comment type="tissue specificity">
    <text evidence="6">Expressed by the venom gland.</text>
</comment>
<comment type="similarity">
    <text evidence="5">Belongs to the venom Kunitz-type family. 03 (sub-Kunitz) subfamily.</text>
</comment>
<name>VKTA1_CYRHA</name>
<accession>D2Y2C2</accession>